<gene>
    <name type="primary">NAAT1</name>
    <name type="ORF">CG3252</name>
</gene>
<organism evidence="6">
    <name type="scientific">Drosophila melanogaster</name>
    <name type="common">Fruit fly</name>
    <dbReference type="NCBI Taxonomy" id="7227"/>
    <lineage>
        <taxon>Eukaryota</taxon>
        <taxon>Metazoa</taxon>
        <taxon>Ecdysozoa</taxon>
        <taxon>Arthropoda</taxon>
        <taxon>Hexapoda</taxon>
        <taxon>Insecta</taxon>
        <taxon>Pterygota</taxon>
        <taxon>Neoptera</taxon>
        <taxon>Endopterygota</taxon>
        <taxon>Diptera</taxon>
        <taxon>Brachycera</taxon>
        <taxon>Muscomorpha</taxon>
        <taxon>Ephydroidea</taxon>
        <taxon>Drosophilidae</taxon>
        <taxon>Drosophila</taxon>
        <taxon>Sophophora</taxon>
    </lineage>
</organism>
<protein>
    <recommendedName>
        <fullName>Sodium-dependent nutrient amino acid transporter 1</fullName>
        <shortName>DmNAT1</shortName>
    </recommendedName>
</protein>
<keyword id="KW-0029">Amino-acid transport</keyword>
<keyword id="KW-0325">Glycoprotein</keyword>
<keyword id="KW-0406">Ion transport</keyword>
<keyword id="KW-0472">Membrane</keyword>
<keyword id="KW-1185">Reference proteome</keyword>
<keyword id="KW-0915">Sodium</keyword>
<keyword id="KW-0739">Sodium transport</keyword>
<keyword id="KW-0769">Symport</keyword>
<keyword id="KW-0812">Transmembrane</keyword>
<keyword id="KW-1133">Transmembrane helix</keyword>
<keyword id="KW-0813">Transport</keyword>
<accession>Q9W4C5</accession>
<accession>Q1AK15</accession>
<accession>Q8MRC8</accession>
<dbReference type="EMBL" id="DQ073009">
    <property type="protein sequence ID" value="AAY56384.1"/>
    <property type="molecule type" value="mRNA"/>
</dbReference>
<dbReference type="EMBL" id="AE014298">
    <property type="protein sequence ID" value="AAF46031.2"/>
    <property type="molecule type" value="Genomic_DNA"/>
</dbReference>
<dbReference type="EMBL" id="AY121662">
    <property type="protein sequence ID" value="AAM51989.1"/>
    <property type="molecule type" value="mRNA"/>
</dbReference>
<dbReference type="RefSeq" id="NP_572219.1">
    <property type="nucleotide sequence ID" value="NM_131991.3"/>
</dbReference>
<dbReference type="SMR" id="Q9W4C5"/>
<dbReference type="BioGRID" id="57964">
    <property type="interactions" value="1"/>
</dbReference>
<dbReference type="FunCoup" id="Q9W4C5">
    <property type="interactions" value="43"/>
</dbReference>
<dbReference type="STRING" id="7227.FBpp0070763"/>
<dbReference type="TCDB" id="2.A.22.2.13">
    <property type="family name" value="the neurotransmitter:sodium symporter (nss) family"/>
</dbReference>
<dbReference type="GlyCosmos" id="Q9W4C5">
    <property type="glycosylation" value="2 sites, No reported glycans"/>
</dbReference>
<dbReference type="GlyGen" id="Q9W4C5">
    <property type="glycosylation" value="3 sites"/>
</dbReference>
<dbReference type="iPTMnet" id="Q9W4C5"/>
<dbReference type="SwissPalm" id="Q9W4C5"/>
<dbReference type="PaxDb" id="7227-FBpp0070763"/>
<dbReference type="DNASU" id="31457"/>
<dbReference type="EnsemblMetazoa" id="FBtr0070797">
    <property type="protein sequence ID" value="FBpp0070763"/>
    <property type="gene ID" value="FBgn0029762"/>
</dbReference>
<dbReference type="GeneID" id="31457"/>
<dbReference type="KEGG" id="dme:Dmel_CG3252"/>
<dbReference type="UCSC" id="CG3252-RA">
    <property type="organism name" value="d. melanogaster"/>
</dbReference>
<dbReference type="AGR" id="FB:FBgn0029762"/>
<dbReference type="CTD" id="31457"/>
<dbReference type="FlyBase" id="FBgn0029762">
    <property type="gene designation" value="NAAT1"/>
</dbReference>
<dbReference type="VEuPathDB" id="VectorBase:FBgn0029762"/>
<dbReference type="eggNOG" id="KOG3660">
    <property type="taxonomic scope" value="Eukaryota"/>
</dbReference>
<dbReference type="GeneTree" id="ENSGT00940000167578"/>
<dbReference type="HOGENOM" id="CLU_006855_9_5_1"/>
<dbReference type="InParanoid" id="Q9W4C5"/>
<dbReference type="OMA" id="LQNFCDD"/>
<dbReference type="OrthoDB" id="6581954at2759"/>
<dbReference type="PhylomeDB" id="Q9W4C5"/>
<dbReference type="Reactome" id="R-DME-352230">
    <property type="pathway name" value="Amino acid transport across the plasma membrane"/>
</dbReference>
<dbReference type="Reactome" id="R-DME-442660">
    <property type="pathway name" value="Na+/Cl- dependent neurotransmitter transporters"/>
</dbReference>
<dbReference type="BioGRID-ORCS" id="31457">
    <property type="hits" value="0 hits in 3 CRISPR screens"/>
</dbReference>
<dbReference type="GenomeRNAi" id="31457"/>
<dbReference type="PRO" id="PR:Q9W4C5"/>
<dbReference type="Proteomes" id="UP000000803">
    <property type="component" value="Chromosome X"/>
</dbReference>
<dbReference type="Bgee" id="FBgn0029762">
    <property type="expression patterns" value="Expressed in adult Malpighian tubule principal cell of lower ureter in Malpighian tubule and 142 other cell types or tissues"/>
</dbReference>
<dbReference type="ExpressionAtlas" id="Q9W4C5">
    <property type="expression patterns" value="baseline and differential"/>
</dbReference>
<dbReference type="GO" id="GO:0016020">
    <property type="term" value="C:membrane"/>
    <property type="evidence" value="ECO:0000255"/>
    <property type="project" value="FlyBase"/>
</dbReference>
<dbReference type="GO" id="GO:0005886">
    <property type="term" value="C:plasma membrane"/>
    <property type="evidence" value="ECO:0000318"/>
    <property type="project" value="GO_Central"/>
</dbReference>
<dbReference type="GO" id="GO:0005416">
    <property type="term" value="F:amino acid:monoatomic cation symporter activity"/>
    <property type="evidence" value="ECO:0000255"/>
    <property type="project" value="FlyBase"/>
</dbReference>
<dbReference type="GO" id="GO:0005283">
    <property type="term" value="F:amino acid:sodium symporter activity"/>
    <property type="evidence" value="ECO:0000315"/>
    <property type="project" value="UniProtKB"/>
</dbReference>
<dbReference type="GO" id="GO:0042943">
    <property type="term" value="F:D-amino acid transmembrane transporter activity"/>
    <property type="evidence" value="ECO:0000314"/>
    <property type="project" value="FlyBase"/>
</dbReference>
<dbReference type="GO" id="GO:0015179">
    <property type="term" value="F:L-amino acid transmembrane transporter activity"/>
    <property type="evidence" value="ECO:0000314"/>
    <property type="project" value="FlyBase"/>
</dbReference>
<dbReference type="GO" id="GO:0005326">
    <property type="term" value="F:neurotransmitter transmembrane transporter activity"/>
    <property type="evidence" value="ECO:0000250"/>
    <property type="project" value="FlyBase"/>
</dbReference>
<dbReference type="GO" id="GO:0015175">
    <property type="term" value="F:neutral L-amino acid transmembrane transporter activity"/>
    <property type="evidence" value="ECO:0000314"/>
    <property type="project" value="FlyBase"/>
</dbReference>
<dbReference type="GO" id="GO:0003333">
    <property type="term" value="P:amino acid transmembrane transport"/>
    <property type="evidence" value="ECO:0000255"/>
    <property type="project" value="FlyBase"/>
</dbReference>
<dbReference type="GO" id="GO:0042940">
    <property type="term" value="P:D-amino acid transport"/>
    <property type="evidence" value="ECO:0000314"/>
    <property type="project" value="FlyBase"/>
</dbReference>
<dbReference type="GO" id="GO:1903804">
    <property type="term" value="P:glycine import across plasma membrane"/>
    <property type="evidence" value="ECO:0000318"/>
    <property type="project" value="GO_Central"/>
</dbReference>
<dbReference type="GO" id="GO:0015807">
    <property type="term" value="P:L-amino acid transport"/>
    <property type="evidence" value="ECO:0000314"/>
    <property type="project" value="FlyBase"/>
</dbReference>
<dbReference type="GO" id="GO:0006836">
    <property type="term" value="P:neurotransmitter transport"/>
    <property type="evidence" value="ECO:0000250"/>
    <property type="project" value="FlyBase"/>
</dbReference>
<dbReference type="GO" id="GO:0015804">
    <property type="term" value="P:neutral amino acid transport"/>
    <property type="evidence" value="ECO:0000314"/>
    <property type="project" value="FlyBase"/>
</dbReference>
<dbReference type="GO" id="GO:0035725">
    <property type="term" value="P:sodium ion transmembrane transport"/>
    <property type="evidence" value="ECO:0000318"/>
    <property type="project" value="GO_Central"/>
</dbReference>
<dbReference type="GO" id="GO:0006814">
    <property type="term" value="P:sodium ion transport"/>
    <property type="evidence" value="ECO:0000315"/>
    <property type="project" value="UniProtKB"/>
</dbReference>
<dbReference type="CDD" id="cd10324">
    <property type="entry name" value="SLC6sbd"/>
    <property type="match status" value="1"/>
</dbReference>
<dbReference type="InterPro" id="IPR000175">
    <property type="entry name" value="Na/ntran_symport"/>
</dbReference>
<dbReference type="InterPro" id="IPR037272">
    <property type="entry name" value="SNS_sf"/>
</dbReference>
<dbReference type="NCBIfam" id="NF037979">
    <property type="entry name" value="Na_transp"/>
    <property type="match status" value="1"/>
</dbReference>
<dbReference type="PANTHER" id="PTHR11616:SF321">
    <property type="entry name" value="SODIUM-DEPENDENT NUTRIENT AMINO ACID TRANSPORTER 1-RELATED"/>
    <property type="match status" value="1"/>
</dbReference>
<dbReference type="PANTHER" id="PTHR11616">
    <property type="entry name" value="SODIUM/CHLORIDE DEPENDENT TRANSPORTER"/>
    <property type="match status" value="1"/>
</dbReference>
<dbReference type="Pfam" id="PF00209">
    <property type="entry name" value="SNF"/>
    <property type="match status" value="1"/>
</dbReference>
<dbReference type="PRINTS" id="PR00176">
    <property type="entry name" value="NANEUSMPORT"/>
</dbReference>
<dbReference type="SUPFAM" id="SSF161070">
    <property type="entry name" value="SNF-like"/>
    <property type="match status" value="1"/>
</dbReference>
<dbReference type="PROSITE" id="PS00610">
    <property type="entry name" value="NA_NEUROTRAN_SYMP_1"/>
    <property type="match status" value="1"/>
</dbReference>
<dbReference type="PROSITE" id="PS00754">
    <property type="entry name" value="NA_NEUROTRAN_SYMP_2"/>
    <property type="match status" value="1"/>
</dbReference>
<dbReference type="PROSITE" id="PS50267">
    <property type="entry name" value="NA_NEUROTRAN_SYMP_3"/>
    <property type="match status" value="1"/>
</dbReference>
<evidence type="ECO:0000255" key="1"/>
<evidence type="ECO:0000256" key="2">
    <source>
        <dbReference type="SAM" id="MobiDB-lite"/>
    </source>
</evidence>
<evidence type="ECO:0000269" key="3">
    <source>
    </source>
</evidence>
<evidence type="ECO:0000269" key="4">
    <source>
    </source>
</evidence>
<evidence type="ECO:0000305" key="5"/>
<evidence type="ECO:0000312" key="6">
    <source>
        <dbReference type="EMBL" id="AAF46031.2"/>
    </source>
</evidence>
<evidence type="ECO:0000312" key="7">
    <source>
        <dbReference type="EMBL" id="AAM51989.1"/>
    </source>
</evidence>
<name>NAAT1_DROME</name>
<reference key="1">
    <citation type="journal article" date="2008" name="Insect Biochem. Mol. Biol.">
        <title>The invertebrate B(0) system transporter, D. melanogaster NAT1, has unique d-amino acid affinity and mediates gut and brain functions.</title>
        <authorList>
            <person name="Miller M.M."/>
            <person name="Popova L.B."/>
            <person name="Meleshkevitch E.A."/>
            <person name="Tran P.V."/>
            <person name="Boudko D.Y."/>
        </authorList>
    </citation>
    <scope>NUCLEOTIDE SEQUENCE [MRNA]</scope>
    <scope>FUNCTION</scope>
    <scope>TISSUE SPECIFICITY</scope>
    <source>
        <strain>W118</strain>
        <tissue>Gastrointestinal tract</tissue>
    </source>
</reference>
<reference key="2">
    <citation type="journal article" date="2000" name="Science">
        <title>The genome sequence of Drosophila melanogaster.</title>
        <authorList>
            <person name="Adams M.D."/>
            <person name="Celniker S.E."/>
            <person name="Holt R.A."/>
            <person name="Evans C.A."/>
            <person name="Gocayne J.D."/>
            <person name="Amanatides P.G."/>
            <person name="Scherer S.E."/>
            <person name="Li P.W."/>
            <person name="Hoskins R.A."/>
            <person name="Galle R.F."/>
            <person name="George R.A."/>
            <person name="Lewis S.E."/>
            <person name="Richards S."/>
            <person name="Ashburner M."/>
            <person name="Henderson S.N."/>
            <person name="Sutton G.G."/>
            <person name="Wortman J.R."/>
            <person name="Yandell M.D."/>
            <person name="Zhang Q."/>
            <person name="Chen L.X."/>
            <person name="Brandon R.C."/>
            <person name="Rogers Y.-H.C."/>
            <person name="Blazej R.G."/>
            <person name="Champe M."/>
            <person name="Pfeiffer B.D."/>
            <person name="Wan K.H."/>
            <person name="Doyle C."/>
            <person name="Baxter E.G."/>
            <person name="Helt G."/>
            <person name="Nelson C.R."/>
            <person name="Miklos G.L.G."/>
            <person name="Abril J.F."/>
            <person name="Agbayani A."/>
            <person name="An H.-J."/>
            <person name="Andrews-Pfannkoch C."/>
            <person name="Baldwin D."/>
            <person name="Ballew R.M."/>
            <person name="Basu A."/>
            <person name="Baxendale J."/>
            <person name="Bayraktaroglu L."/>
            <person name="Beasley E.M."/>
            <person name="Beeson K.Y."/>
            <person name="Benos P.V."/>
            <person name="Berman B.P."/>
            <person name="Bhandari D."/>
            <person name="Bolshakov S."/>
            <person name="Borkova D."/>
            <person name="Botchan M.R."/>
            <person name="Bouck J."/>
            <person name="Brokstein P."/>
            <person name="Brottier P."/>
            <person name="Burtis K.C."/>
            <person name="Busam D.A."/>
            <person name="Butler H."/>
            <person name="Cadieu E."/>
            <person name="Center A."/>
            <person name="Chandra I."/>
            <person name="Cherry J.M."/>
            <person name="Cawley S."/>
            <person name="Dahlke C."/>
            <person name="Davenport L.B."/>
            <person name="Davies P."/>
            <person name="de Pablos B."/>
            <person name="Delcher A."/>
            <person name="Deng Z."/>
            <person name="Mays A.D."/>
            <person name="Dew I."/>
            <person name="Dietz S.M."/>
            <person name="Dodson K."/>
            <person name="Doup L.E."/>
            <person name="Downes M."/>
            <person name="Dugan-Rocha S."/>
            <person name="Dunkov B.C."/>
            <person name="Dunn P."/>
            <person name="Durbin K.J."/>
            <person name="Evangelista C.C."/>
            <person name="Ferraz C."/>
            <person name="Ferriera S."/>
            <person name="Fleischmann W."/>
            <person name="Fosler C."/>
            <person name="Gabrielian A.E."/>
            <person name="Garg N.S."/>
            <person name="Gelbart W.M."/>
            <person name="Glasser K."/>
            <person name="Glodek A."/>
            <person name="Gong F."/>
            <person name="Gorrell J.H."/>
            <person name="Gu Z."/>
            <person name="Guan P."/>
            <person name="Harris M."/>
            <person name="Harris N.L."/>
            <person name="Harvey D.A."/>
            <person name="Heiman T.J."/>
            <person name="Hernandez J.R."/>
            <person name="Houck J."/>
            <person name="Hostin D."/>
            <person name="Houston K.A."/>
            <person name="Howland T.J."/>
            <person name="Wei M.-H."/>
            <person name="Ibegwam C."/>
            <person name="Jalali M."/>
            <person name="Kalush F."/>
            <person name="Karpen G.H."/>
            <person name="Ke Z."/>
            <person name="Kennison J.A."/>
            <person name="Ketchum K.A."/>
            <person name="Kimmel B.E."/>
            <person name="Kodira C.D."/>
            <person name="Kraft C.L."/>
            <person name="Kravitz S."/>
            <person name="Kulp D."/>
            <person name="Lai Z."/>
            <person name="Lasko P."/>
            <person name="Lei Y."/>
            <person name="Levitsky A.A."/>
            <person name="Li J.H."/>
            <person name="Li Z."/>
            <person name="Liang Y."/>
            <person name="Lin X."/>
            <person name="Liu X."/>
            <person name="Mattei B."/>
            <person name="McIntosh T.C."/>
            <person name="McLeod M.P."/>
            <person name="McPherson D."/>
            <person name="Merkulov G."/>
            <person name="Milshina N.V."/>
            <person name="Mobarry C."/>
            <person name="Morris J."/>
            <person name="Moshrefi A."/>
            <person name="Mount S.M."/>
            <person name="Moy M."/>
            <person name="Murphy B."/>
            <person name="Murphy L."/>
            <person name="Muzny D.M."/>
            <person name="Nelson D.L."/>
            <person name="Nelson D.R."/>
            <person name="Nelson K.A."/>
            <person name="Nixon K."/>
            <person name="Nusskern D.R."/>
            <person name="Pacleb J.M."/>
            <person name="Palazzolo M."/>
            <person name="Pittman G.S."/>
            <person name="Pan S."/>
            <person name="Pollard J."/>
            <person name="Puri V."/>
            <person name="Reese M.G."/>
            <person name="Reinert K."/>
            <person name="Remington K."/>
            <person name="Saunders R.D.C."/>
            <person name="Scheeler F."/>
            <person name="Shen H."/>
            <person name="Shue B.C."/>
            <person name="Siden-Kiamos I."/>
            <person name="Simpson M."/>
            <person name="Skupski M.P."/>
            <person name="Smith T.J."/>
            <person name="Spier E."/>
            <person name="Spradling A.C."/>
            <person name="Stapleton M."/>
            <person name="Strong R."/>
            <person name="Sun E."/>
            <person name="Svirskas R."/>
            <person name="Tector C."/>
            <person name="Turner R."/>
            <person name="Venter E."/>
            <person name="Wang A.H."/>
            <person name="Wang X."/>
            <person name="Wang Z.-Y."/>
            <person name="Wassarman D.A."/>
            <person name="Weinstock G.M."/>
            <person name="Weissenbach J."/>
            <person name="Williams S.M."/>
            <person name="Woodage T."/>
            <person name="Worley K.C."/>
            <person name="Wu D."/>
            <person name="Yang S."/>
            <person name="Yao Q.A."/>
            <person name="Ye J."/>
            <person name="Yeh R.-F."/>
            <person name="Zaveri J.S."/>
            <person name="Zhan M."/>
            <person name="Zhang G."/>
            <person name="Zhao Q."/>
            <person name="Zheng L."/>
            <person name="Zheng X.H."/>
            <person name="Zhong F.N."/>
            <person name="Zhong W."/>
            <person name="Zhou X."/>
            <person name="Zhu S.C."/>
            <person name="Zhu X."/>
            <person name="Smith H.O."/>
            <person name="Gibbs R.A."/>
            <person name="Myers E.W."/>
            <person name="Rubin G.M."/>
            <person name="Venter J.C."/>
        </authorList>
    </citation>
    <scope>NUCLEOTIDE SEQUENCE [LARGE SCALE GENOMIC DNA]</scope>
    <source>
        <strain evidence="6">Berkeley</strain>
    </source>
</reference>
<reference evidence="5" key="3">
    <citation type="journal article" date="2002" name="Genome Biol.">
        <title>Annotation of the Drosophila melanogaster euchromatic genome: a systematic review.</title>
        <authorList>
            <person name="Misra S."/>
            <person name="Crosby M.A."/>
            <person name="Mungall C.J."/>
            <person name="Matthews B.B."/>
            <person name="Campbell K.S."/>
            <person name="Hradecky P."/>
            <person name="Huang Y."/>
            <person name="Kaminker J.S."/>
            <person name="Millburn G.H."/>
            <person name="Prochnik S.E."/>
            <person name="Smith C.D."/>
            <person name="Tupy J.L."/>
            <person name="Whitfield E.J."/>
            <person name="Bayraktaroglu L."/>
            <person name="Berman B.P."/>
            <person name="Bettencourt B.R."/>
            <person name="Celniker S.E."/>
            <person name="de Grey A.D.N.J."/>
            <person name="Drysdale R.A."/>
            <person name="Harris N.L."/>
            <person name="Richter J."/>
            <person name="Russo S."/>
            <person name="Schroeder A.J."/>
            <person name="Shu S.Q."/>
            <person name="Stapleton M."/>
            <person name="Yamada C."/>
            <person name="Ashburner M."/>
            <person name="Gelbart W.M."/>
            <person name="Rubin G.M."/>
            <person name="Lewis S.E."/>
        </authorList>
    </citation>
    <scope>GENOME REANNOTATION</scope>
    <source>
        <strain evidence="6">Berkeley</strain>
    </source>
</reference>
<reference evidence="5" key="4">
    <citation type="journal article" date="2002" name="Genome Biol.">
        <title>A Drosophila full-length cDNA resource.</title>
        <authorList>
            <person name="Stapleton M."/>
            <person name="Carlson J.W."/>
            <person name="Brokstein P."/>
            <person name="Yu C."/>
            <person name="Champe M."/>
            <person name="George R.A."/>
            <person name="Guarin H."/>
            <person name="Kronmiller B."/>
            <person name="Pacleb J.M."/>
            <person name="Park S."/>
            <person name="Wan K.H."/>
            <person name="Rubin G.M."/>
            <person name="Celniker S.E."/>
        </authorList>
    </citation>
    <scope>NUCLEOTIDE SEQUENCE [LARGE SCALE MRNA]</scope>
    <source>
        <strain evidence="7">Berkeley</strain>
        <tissue evidence="7">Embryo</tissue>
    </source>
</reference>
<reference key="5">
    <citation type="journal article" date="2007" name="Glycobiology">
        <title>Identification of N-glycosylated proteins from the central nervous system of Drosophila melanogaster.</title>
        <authorList>
            <person name="Koles K."/>
            <person name="Lim J.-M."/>
            <person name="Aoki K."/>
            <person name="Porterfield M."/>
            <person name="Tiemeyer M."/>
            <person name="Wells L."/>
            <person name="Panin V."/>
        </authorList>
    </citation>
    <scope>GLYCOSYLATION [LARGE SCALE ANALYSIS] AT ASN-190</scope>
    <scope>IDENTIFICATION BY MASS SPECTROMETRY</scope>
    <source>
        <strain>Oregon-R</strain>
        <tissue>Head</tissue>
    </source>
</reference>
<feature type="chain" id="PRO_0000214817" description="Sodium-dependent nutrient amino acid transporter 1">
    <location>
        <begin position="1"/>
        <end position="641"/>
    </location>
</feature>
<feature type="topological domain" description="Cytoplasmic" evidence="1">
    <location>
        <begin position="1"/>
        <end position="40"/>
    </location>
</feature>
<feature type="transmembrane region" description="Helical; Name=1" evidence="1">
    <location>
        <begin position="41"/>
        <end position="61"/>
    </location>
</feature>
<feature type="transmembrane region" description="Helical; Name=2" evidence="1">
    <location>
        <begin position="74"/>
        <end position="94"/>
    </location>
</feature>
<feature type="transmembrane region" description="Helical; Name=3" evidence="1">
    <location>
        <begin position="111"/>
        <end position="131"/>
    </location>
</feature>
<feature type="transmembrane region" description="Helical; Name=4" evidence="1">
    <location>
        <begin position="229"/>
        <end position="249"/>
    </location>
</feature>
<feature type="transmembrane region" description="Helical; Name=5" evidence="1">
    <location>
        <begin position="258"/>
        <end position="278"/>
    </location>
</feature>
<feature type="transmembrane region" description="Helical; Name=6" evidence="1">
    <location>
        <begin position="307"/>
        <end position="327"/>
    </location>
</feature>
<feature type="transmembrane region" description="Helical; Name=7" evidence="1">
    <location>
        <begin position="341"/>
        <end position="361"/>
    </location>
</feature>
<feature type="transmembrane region" description="Helical; Name=8" evidence="1">
    <location>
        <begin position="401"/>
        <end position="421"/>
    </location>
</feature>
<feature type="transmembrane region" description="Helical; Name=9" evidence="1">
    <location>
        <begin position="447"/>
        <end position="467"/>
    </location>
</feature>
<feature type="transmembrane region" description="Helical; Name=10" evidence="1">
    <location>
        <begin position="474"/>
        <end position="494"/>
    </location>
</feature>
<feature type="transmembrane region" description="Helical; Name=11" evidence="1">
    <location>
        <begin position="516"/>
        <end position="536"/>
    </location>
</feature>
<feature type="transmembrane region" description="Helical; Name=12" evidence="1">
    <location>
        <begin position="552"/>
        <end position="572"/>
    </location>
</feature>
<feature type="region of interest" description="Disordered" evidence="2">
    <location>
        <begin position="1"/>
        <end position="38"/>
    </location>
</feature>
<feature type="compositionally biased region" description="Low complexity" evidence="2">
    <location>
        <begin position="9"/>
        <end position="26"/>
    </location>
</feature>
<feature type="compositionally biased region" description="Basic and acidic residues" evidence="2">
    <location>
        <begin position="27"/>
        <end position="36"/>
    </location>
</feature>
<feature type="glycosylation site" description="N-linked (GlcNAc...) asparagine" evidence="1">
    <location>
        <position position="185"/>
    </location>
</feature>
<feature type="glycosylation site" description="N-linked (GlcNAc...) asparagine" evidence="3">
    <location>
        <position position="190"/>
    </location>
</feature>
<feature type="sequence conflict" description="In Ref. 4; AAM51989." evidence="5" ref="4">
    <original>D</original>
    <variation>G</variation>
    <location>
        <position position="622"/>
    </location>
</feature>
<feature type="sequence conflict" description="In Ref. 1; AAY56384." evidence="5" ref="1">
    <original>F</original>
    <variation>L</variation>
    <location>
        <position position="636"/>
    </location>
</feature>
<proteinExistence type="evidence at protein level"/>
<sequence>MELKGVQPSNGSSNGSGNGATNAASTEKTDAEKPTAERTNWGNGLEFLMSCISVSVGLGNVWRFPFTAYENGGGAFLIPYIIVLFLIGKPMYYLEMIMGQFTSQGTVKIWSVVPGFVGVGYGQAFGTICIISYYSSLLALTLYYLFVSFQSELPWSYCRDEWTNCVNSRPQEYVDNLLTGVSLANESARNLSGIVANDETEKLQSSSELYFLNVVIKEKLDISDGVGDPDWKLTLALFVAWVVIFLVIMRGVKSSGKAAYFLALFPYVVLFVLLIRAVTLEGARDGILFFLEPQWGELLNPTVWKEAVVQCFFSLAVGSGPIIMFASYNRFDHGIYRDAMIVTTLDTLTSLLGGITIFAILGNLAHNLQIENIRDVVRSGTGLAFISYPDAISKFQAVPQLFSVLFFFMLFVLGIGSIVALQSTIVTIICDQFKGWKYWKVALTTSVCGFLMGLVYVTPGGQWILTLVDFYGGTYVVFILAIFELAGIVWVYGLQNFCDDIEFMCNRRVSLYWRVCWSFFTPVMMIIIFIYSMVTIEPIKYSELYFPEAANIAGWLLFAIGAAQFPLWGLWYISRHPQGTYWKSLKASLKPSDRWGPANPEIRREWVIFKNQKAAQRATQKDTSKLGFFWRKVANFCGSNK</sequence>
<comment type="function">
    <text evidence="4">Unusual broad substrate spectrum amino acid:sodium cotransporter that promotes absorption of the D isomers of essential amino acids. Neutral amino acids are the preferred substrates, especially methionine and phenylalanine.</text>
</comment>
<comment type="subcellular location">
    <subcellularLocation>
        <location evidence="5">Membrane</location>
        <topology evidence="5">Multi-pass membrane protein</topology>
    </subcellularLocation>
</comment>
<comment type="tissue specificity">
    <text evidence="4">In larvae, weak specific expression in the anterior midgut just proximal to the gastric caeca reproductive rudiments, common ureters of the Malpighian tubules, and distal swollen portion of the anterior pair of Malpighian tubules. Expression is also seen in the imaginal disks of the head; brain hemispheres and the ventral ganglion. Stronger expression in the posterior midgut.</text>
</comment>
<comment type="similarity">
    <text evidence="5">Belongs to the sodium:neurotransmitter symporter (SNF) (TC 2.A.22) family.</text>
</comment>